<evidence type="ECO:0000250" key="1">
    <source>
        <dbReference type="UniProtKB" id="P49753"/>
    </source>
</evidence>
<evidence type="ECO:0000255" key="2"/>
<evidence type="ECO:0000269" key="3">
    <source>
    </source>
</evidence>
<evidence type="ECO:0000269" key="4">
    <source>
    </source>
</evidence>
<evidence type="ECO:0000269" key="5">
    <source>
    </source>
</evidence>
<evidence type="ECO:0000305" key="6"/>
<evidence type="ECO:0007744" key="7">
    <source>
    </source>
</evidence>
<evidence type="ECO:0007744" key="8">
    <source>
    </source>
</evidence>
<proteinExistence type="evidence at protein level"/>
<gene>
    <name type="primary">Acot2</name>
    <name type="synonym">Mte1</name>
</gene>
<reference key="1">
    <citation type="journal article" date="1999" name="J. Biol. Chem.">
        <title>Peroxisome proliferator-induced long chain acyl-CoA thioesterases comprise a highly conserved novel multi-gene family involved in lipid metabolism.</title>
        <authorList>
            <person name="Hunt M.C."/>
            <person name="Nousiainen S.E.B."/>
            <person name="Huttunen M.K."/>
            <person name="Orii K.E."/>
            <person name="Svensson L.T."/>
            <person name="Alexson S.E.H."/>
        </authorList>
    </citation>
    <scope>NUCLEOTIDE SEQUENCE [GENOMIC DNA]</scope>
    <scope>TISSUE SPECIFICITY</scope>
    <source>
        <strain>C57BL/6J</strain>
    </source>
</reference>
<reference key="2">
    <citation type="journal article" date="2000" name="Cell Biochem. Biophys.">
        <title>Acyl-CoA thioesterases belong to a novel gene family of peroxisome proliferator-regulated enzymes involved in lipid metabolism.</title>
        <authorList>
            <person name="Hunt M.C."/>
            <person name="Lindquist P.J.G."/>
            <person name="Nousiainen S.E.B."/>
            <person name="Huttunen M.K."/>
            <person name="Orii K.E."/>
            <person name="Svensson L.T."/>
            <person name="Aoyama T."/>
            <person name="Hashimoto T."/>
            <person name="Diczfalusy U."/>
            <person name="Alexson S.E.H."/>
        </authorList>
    </citation>
    <scope>NUCLEOTIDE SEQUENCE [GENOMIC DNA]</scope>
    <scope>CHARACTERIZATION</scope>
    <scope>INDUCTION</scope>
    <scope>TISSUE SPECIFICITY</scope>
    <source>
        <strain>C57BL/6J</strain>
    </source>
</reference>
<reference key="3">
    <citation type="journal article" date="2005" name="Science">
        <title>The transcriptional landscape of the mammalian genome.</title>
        <authorList>
            <person name="Carninci P."/>
            <person name="Kasukawa T."/>
            <person name="Katayama S."/>
            <person name="Gough J."/>
            <person name="Frith M.C."/>
            <person name="Maeda N."/>
            <person name="Oyama R."/>
            <person name="Ravasi T."/>
            <person name="Lenhard B."/>
            <person name="Wells C."/>
            <person name="Kodzius R."/>
            <person name="Shimokawa K."/>
            <person name="Bajic V.B."/>
            <person name="Brenner S.E."/>
            <person name="Batalov S."/>
            <person name="Forrest A.R."/>
            <person name="Zavolan M."/>
            <person name="Davis M.J."/>
            <person name="Wilming L.G."/>
            <person name="Aidinis V."/>
            <person name="Allen J.E."/>
            <person name="Ambesi-Impiombato A."/>
            <person name="Apweiler R."/>
            <person name="Aturaliya R.N."/>
            <person name="Bailey T.L."/>
            <person name="Bansal M."/>
            <person name="Baxter L."/>
            <person name="Beisel K.W."/>
            <person name="Bersano T."/>
            <person name="Bono H."/>
            <person name="Chalk A.M."/>
            <person name="Chiu K.P."/>
            <person name="Choudhary V."/>
            <person name="Christoffels A."/>
            <person name="Clutterbuck D.R."/>
            <person name="Crowe M.L."/>
            <person name="Dalla E."/>
            <person name="Dalrymple B.P."/>
            <person name="de Bono B."/>
            <person name="Della Gatta G."/>
            <person name="di Bernardo D."/>
            <person name="Down T."/>
            <person name="Engstrom P."/>
            <person name="Fagiolini M."/>
            <person name="Faulkner G."/>
            <person name="Fletcher C.F."/>
            <person name="Fukushima T."/>
            <person name="Furuno M."/>
            <person name="Futaki S."/>
            <person name="Gariboldi M."/>
            <person name="Georgii-Hemming P."/>
            <person name="Gingeras T.R."/>
            <person name="Gojobori T."/>
            <person name="Green R.E."/>
            <person name="Gustincich S."/>
            <person name="Harbers M."/>
            <person name="Hayashi Y."/>
            <person name="Hensch T.K."/>
            <person name="Hirokawa N."/>
            <person name="Hill D."/>
            <person name="Huminiecki L."/>
            <person name="Iacono M."/>
            <person name="Ikeo K."/>
            <person name="Iwama A."/>
            <person name="Ishikawa T."/>
            <person name="Jakt M."/>
            <person name="Kanapin A."/>
            <person name="Katoh M."/>
            <person name="Kawasawa Y."/>
            <person name="Kelso J."/>
            <person name="Kitamura H."/>
            <person name="Kitano H."/>
            <person name="Kollias G."/>
            <person name="Krishnan S.P."/>
            <person name="Kruger A."/>
            <person name="Kummerfeld S.K."/>
            <person name="Kurochkin I.V."/>
            <person name="Lareau L.F."/>
            <person name="Lazarevic D."/>
            <person name="Lipovich L."/>
            <person name="Liu J."/>
            <person name="Liuni S."/>
            <person name="McWilliam S."/>
            <person name="Madan Babu M."/>
            <person name="Madera M."/>
            <person name="Marchionni L."/>
            <person name="Matsuda H."/>
            <person name="Matsuzawa S."/>
            <person name="Miki H."/>
            <person name="Mignone F."/>
            <person name="Miyake S."/>
            <person name="Morris K."/>
            <person name="Mottagui-Tabar S."/>
            <person name="Mulder N."/>
            <person name="Nakano N."/>
            <person name="Nakauchi H."/>
            <person name="Ng P."/>
            <person name="Nilsson R."/>
            <person name="Nishiguchi S."/>
            <person name="Nishikawa S."/>
            <person name="Nori F."/>
            <person name="Ohara O."/>
            <person name="Okazaki Y."/>
            <person name="Orlando V."/>
            <person name="Pang K.C."/>
            <person name="Pavan W.J."/>
            <person name="Pavesi G."/>
            <person name="Pesole G."/>
            <person name="Petrovsky N."/>
            <person name="Piazza S."/>
            <person name="Reed J."/>
            <person name="Reid J.F."/>
            <person name="Ring B.Z."/>
            <person name="Ringwald M."/>
            <person name="Rost B."/>
            <person name="Ruan Y."/>
            <person name="Salzberg S.L."/>
            <person name="Sandelin A."/>
            <person name="Schneider C."/>
            <person name="Schoenbach C."/>
            <person name="Sekiguchi K."/>
            <person name="Semple C.A."/>
            <person name="Seno S."/>
            <person name="Sessa L."/>
            <person name="Sheng Y."/>
            <person name="Shibata Y."/>
            <person name="Shimada H."/>
            <person name="Shimada K."/>
            <person name="Silva D."/>
            <person name="Sinclair B."/>
            <person name="Sperling S."/>
            <person name="Stupka E."/>
            <person name="Sugiura K."/>
            <person name="Sultana R."/>
            <person name="Takenaka Y."/>
            <person name="Taki K."/>
            <person name="Tammoja K."/>
            <person name="Tan S.L."/>
            <person name="Tang S."/>
            <person name="Taylor M.S."/>
            <person name="Tegner J."/>
            <person name="Teichmann S.A."/>
            <person name="Ueda H.R."/>
            <person name="van Nimwegen E."/>
            <person name="Verardo R."/>
            <person name="Wei C.L."/>
            <person name="Yagi K."/>
            <person name="Yamanishi H."/>
            <person name="Zabarovsky E."/>
            <person name="Zhu S."/>
            <person name="Zimmer A."/>
            <person name="Hide W."/>
            <person name="Bult C."/>
            <person name="Grimmond S.M."/>
            <person name="Teasdale R.D."/>
            <person name="Liu E.T."/>
            <person name="Brusic V."/>
            <person name="Quackenbush J."/>
            <person name="Wahlestedt C."/>
            <person name="Mattick J.S."/>
            <person name="Hume D.A."/>
            <person name="Kai C."/>
            <person name="Sasaki D."/>
            <person name="Tomaru Y."/>
            <person name="Fukuda S."/>
            <person name="Kanamori-Katayama M."/>
            <person name="Suzuki M."/>
            <person name="Aoki J."/>
            <person name="Arakawa T."/>
            <person name="Iida J."/>
            <person name="Imamura K."/>
            <person name="Itoh M."/>
            <person name="Kato T."/>
            <person name="Kawaji H."/>
            <person name="Kawagashira N."/>
            <person name="Kawashima T."/>
            <person name="Kojima M."/>
            <person name="Kondo S."/>
            <person name="Konno H."/>
            <person name="Nakano K."/>
            <person name="Ninomiya N."/>
            <person name="Nishio T."/>
            <person name="Okada M."/>
            <person name="Plessy C."/>
            <person name="Shibata K."/>
            <person name="Shiraki T."/>
            <person name="Suzuki S."/>
            <person name="Tagami M."/>
            <person name="Waki K."/>
            <person name="Watahiki A."/>
            <person name="Okamura-Oho Y."/>
            <person name="Suzuki H."/>
            <person name="Kawai J."/>
            <person name="Hayashizaki Y."/>
        </authorList>
    </citation>
    <scope>NUCLEOTIDE SEQUENCE [LARGE SCALE MRNA]</scope>
    <source>
        <strain>NOD</strain>
        <tissue>Spleen</tissue>
    </source>
</reference>
<reference key="4">
    <citation type="submission" date="2005-07" db="EMBL/GenBank/DDBJ databases">
        <authorList>
            <person name="Mural R.J."/>
            <person name="Adams M.D."/>
            <person name="Myers E.W."/>
            <person name="Smith H.O."/>
            <person name="Venter J.C."/>
        </authorList>
    </citation>
    <scope>NUCLEOTIDE SEQUENCE [LARGE SCALE GENOMIC DNA]</scope>
</reference>
<reference key="5">
    <citation type="journal article" date="2010" name="Cell">
        <title>A tissue-specific atlas of mouse protein phosphorylation and expression.</title>
        <authorList>
            <person name="Huttlin E.L."/>
            <person name="Jedrychowski M.P."/>
            <person name="Elias J.E."/>
            <person name="Goswami T."/>
            <person name="Rad R."/>
            <person name="Beausoleil S.A."/>
            <person name="Villen J."/>
            <person name="Haas W."/>
            <person name="Sowa M.E."/>
            <person name="Gygi S.P."/>
        </authorList>
    </citation>
    <scope>IDENTIFICATION BY MASS SPECTROMETRY [LARGE SCALE ANALYSIS]</scope>
    <source>
        <tissue>Brown adipose tissue</tissue>
        <tissue>Heart</tissue>
        <tissue>Kidney</tissue>
        <tissue>Liver</tissue>
        <tissue>Lung</tissue>
        <tissue>Spleen</tissue>
    </source>
</reference>
<reference key="6">
    <citation type="journal article" date="2013" name="Mol. Cell">
        <title>SIRT5-mediated lysine desuccinylation impacts diverse metabolic pathways.</title>
        <authorList>
            <person name="Park J."/>
            <person name="Chen Y."/>
            <person name="Tishkoff D.X."/>
            <person name="Peng C."/>
            <person name="Tan M."/>
            <person name="Dai L."/>
            <person name="Xie Z."/>
            <person name="Zhang Y."/>
            <person name="Zwaans B.M."/>
            <person name="Skinner M.E."/>
            <person name="Lombard D.B."/>
            <person name="Zhao Y."/>
        </authorList>
    </citation>
    <scope>SUCCINYLATION [LARGE SCALE ANALYSIS] AT LYS-447</scope>
    <scope>IDENTIFICATION BY MASS SPECTROMETRY [LARGE SCALE ANALYSIS]</scope>
    <source>
        <tissue>Liver</tissue>
    </source>
</reference>
<reference key="7">
    <citation type="journal article" date="2013" name="Proc. Natl. Acad. Sci. U.S.A.">
        <title>Label-free quantitative proteomics of the lysine acetylome in mitochondria identifies substrates of SIRT3 in metabolic pathways.</title>
        <authorList>
            <person name="Rardin M.J."/>
            <person name="Newman J.C."/>
            <person name="Held J.M."/>
            <person name="Cusack M.P."/>
            <person name="Sorensen D.J."/>
            <person name="Li B."/>
            <person name="Schilling B."/>
            <person name="Mooney S.D."/>
            <person name="Kahn C.R."/>
            <person name="Verdin E."/>
            <person name="Gibson B.W."/>
        </authorList>
    </citation>
    <scope>ACETYLATION [LARGE SCALE ANALYSIS] AT LYS-83</scope>
    <scope>IDENTIFICATION BY MASS SPECTROMETRY [LARGE SCALE ANALYSIS]</scope>
    <source>
        <tissue>Liver</tissue>
    </source>
</reference>
<reference key="8">
    <citation type="journal article" date="2014" name="J. Lipid Res.">
        <title>Acyl-CoA thioesterase-2 facilitates mitochondrial fatty acid oxidation in the liver.</title>
        <authorList>
            <person name="Moffat C."/>
            <person name="Bhatia L."/>
            <person name="Nguyen T."/>
            <person name="Lynch P."/>
            <person name="Wang M."/>
            <person name="Wang D."/>
            <person name="Ilkayeva O.R."/>
            <person name="Han X."/>
            <person name="Hirschey M.D."/>
            <person name="Claypool S.M."/>
            <person name="Seifert E.L."/>
        </authorList>
    </citation>
    <scope>FUNCTION</scope>
    <scope>CATALYTIC ACTIVITY</scope>
    <scope>PATHWAY</scope>
    <scope>SUBUNIT</scope>
    <scope>SUBCELLULAR LOCATION</scope>
    <source>
        <strain>C57BL/6J</strain>
    </source>
</reference>
<dbReference type="EC" id="3.1.2.2" evidence="5"/>
<dbReference type="EMBL" id="AF180798">
    <property type="protein sequence ID" value="AAF13871.1"/>
    <property type="molecule type" value="Genomic_DNA"/>
</dbReference>
<dbReference type="EMBL" id="AF180796">
    <property type="protein sequence ID" value="AAF13871.1"/>
    <property type="status" value="JOINED"/>
    <property type="molecule type" value="Genomic_DNA"/>
</dbReference>
<dbReference type="EMBL" id="AF180797">
    <property type="protein sequence ID" value="AAF13871.1"/>
    <property type="status" value="JOINED"/>
    <property type="molecule type" value="Genomic_DNA"/>
</dbReference>
<dbReference type="EMBL" id="AK172617">
    <property type="protein sequence ID" value="BAE43095.1"/>
    <property type="molecule type" value="mRNA"/>
</dbReference>
<dbReference type="EMBL" id="CH466590">
    <property type="protein sequence ID" value="EDL02755.1"/>
    <property type="molecule type" value="Genomic_DNA"/>
</dbReference>
<dbReference type="CCDS" id="CCDS26034.1"/>
<dbReference type="RefSeq" id="NP_598949.3">
    <property type="nucleotide sequence ID" value="NM_134188.3"/>
</dbReference>
<dbReference type="SMR" id="Q9QYR9"/>
<dbReference type="BioGRID" id="228518">
    <property type="interactions" value="2"/>
</dbReference>
<dbReference type="FunCoup" id="Q9QYR9">
    <property type="interactions" value="304"/>
</dbReference>
<dbReference type="IntAct" id="Q9QYR9">
    <property type="interactions" value="1"/>
</dbReference>
<dbReference type="STRING" id="10090.ENSMUSP00000021649"/>
<dbReference type="ChEMBL" id="CHEMBL3259488"/>
<dbReference type="ESTHER" id="mouse-acot2">
    <property type="family name" value="Acyl-CoA_Thioesterase"/>
</dbReference>
<dbReference type="MEROPS" id="S09.A52"/>
<dbReference type="GlyGen" id="Q9QYR9">
    <property type="glycosylation" value="1 site, 1 O-linked glycan (1 site)"/>
</dbReference>
<dbReference type="iPTMnet" id="Q9QYR9"/>
<dbReference type="PhosphoSitePlus" id="Q9QYR9"/>
<dbReference type="jPOST" id="Q9QYR9"/>
<dbReference type="PaxDb" id="10090-ENSMUSP00000021649"/>
<dbReference type="PeptideAtlas" id="Q9QYR9"/>
<dbReference type="ProteomicsDB" id="285648"/>
<dbReference type="Pumba" id="Q9QYR9"/>
<dbReference type="DNASU" id="171210"/>
<dbReference type="Ensembl" id="ENSMUST00000021649.8">
    <property type="protein sequence ID" value="ENSMUSP00000021649.8"/>
    <property type="gene ID" value="ENSMUSG00000021226.8"/>
</dbReference>
<dbReference type="GeneID" id="171210"/>
<dbReference type="KEGG" id="mmu:171210"/>
<dbReference type="UCSC" id="uc011yor.1">
    <property type="organism name" value="mouse"/>
</dbReference>
<dbReference type="AGR" id="MGI:2159605"/>
<dbReference type="CTD" id="10965"/>
<dbReference type="MGI" id="MGI:2159605">
    <property type="gene designation" value="Acot2"/>
</dbReference>
<dbReference type="VEuPathDB" id="HostDB:ENSMUSG00000021226"/>
<dbReference type="eggNOG" id="ENOG502QQ8Z">
    <property type="taxonomic scope" value="Eukaryota"/>
</dbReference>
<dbReference type="GeneTree" id="ENSGT01010000222336"/>
<dbReference type="HOGENOM" id="CLU_029849_4_0_1"/>
<dbReference type="InParanoid" id="Q9QYR9"/>
<dbReference type="OMA" id="TTAMTWM"/>
<dbReference type="OrthoDB" id="6347013at2759"/>
<dbReference type="PhylomeDB" id="Q9QYR9"/>
<dbReference type="TreeFam" id="TF314911"/>
<dbReference type="BRENDA" id="3.1.2.2">
    <property type="organism ID" value="3474"/>
</dbReference>
<dbReference type="Reactome" id="R-MMU-77289">
    <property type="pathway name" value="Mitochondrial Fatty Acid Beta-Oxidation"/>
</dbReference>
<dbReference type="Reactome" id="R-MMU-9033241">
    <property type="pathway name" value="Peroxisomal protein import"/>
</dbReference>
<dbReference type="Reactome" id="R-MMU-9837999">
    <property type="pathway name" value="Mitochondrial protein degradation"/>
</dbReference>
<dbReference type="UniPathway" id="UPA00199"/>
<dbReference type="BioGRID-ORCS" id="171210">
    <property type="hits" value="2 hits in 81 CRISPR screens"/>
</dbReference>
<dbReference type="PRO" id="PR:Q9QYR9"/>
<dbReference type="Proteomes" id="UP000000589">
    <property type="component" value="Chromosome 12"/>
</dbReference>
<dbReference type="RNAct" id="Q9QYR9">
    <property type="molecule type" value="protein"/>
</dbReference>
<dbReference type="Bgee" id="ENSMUSG00000021226">
    <property type="expression patterns" value="Expressed in interventricular septum and 231 other cell types or tissues"/>
</dbReference>
<dbReference type="GO" id="GO:0005759">
    <property type="term" value="C:mitochondrial matrix"/>
    <property type="evidence" value="ECO:0007669"/>
    <property type="project" value="UniProtKB-SubCell"/>
</dbReference>
<dbReference type="GO" id="GO:0005739">
    <property type="term" value="C:mitochondrion"/>
    <property type="evidence" value="ECO:0007005"/>
    <property type="project" value="MGI"/>
</dbReference>
<dbReference type="GO" id="GO:0052689">
    <property type="term" value="F:carboxylic ester hydrolase activity"/>
    <property type="evidence" value="ECO:0007669"/>
    <property type="project" value="UniProtKB-KW"/>
</dbReference>
<dbReference type="GO" id="GO:0047617">
    <property type="term" value="F:fatty acyl-CoA hydrolase activity"/>
    <property type="evidence" value="ECO:0000304"/>
    <property type="project" value="MGI"/>
</dbReference>
<dbReference type="GO" id="GO:0006637">
    <property type="term" value="P:acyl-CoA metabolic process"/>
    <property type="evidence" value="ECO:0000304"/>
    <property type="project" value="MGI"/>
</dbReference>
<dbReference type="GO" id="GO:0006631">
    <property type="term" value="P:fatty acid metabolic process"/>
    <property type="evidence" value="ECO:0007669"/>
    <property type="project" value="UniProtKB-UniPathway"/>
</dbReference>
<dbReference type="FunFam" id="2.60.40.2240:FF:000001">
    <property type="entry name" value="acyl-coenzyme A thioesterase 4"/>
    <property type="match status" value="1"/>
</dbReference>
<dbReference type="FunFam" id="3.40.50.1820:FF:000024">
    <property type="entry name" value="acyl-coenzyme A thioesterase 4"/>
    <property type="match status" value="1"/>
</dbReference>
<dbReference type="Gene3D" id="2.60.40.2240">
    <property type="entry name" value="Acyl-CoA thioester hydrolase/BAAT N-terminal domain"/>
    <property type="match status" value="1"/>
</dbReference>
<dbReference type="Gene3D" id="3.40.50.1820">
    <property type="entry name" value="alpha/beta hydrolase"/>
    <property type="match status" value="1"/>
</dbReference>
<dbReference type="InterPro" id="IPR029058">
    <property type="entry name" value="AB_hydrolase_fold"/>
</dbReference>
<dbReference type="InterPro" id="IPR016662">
    <property type="entry name" value="Acyl-CoA_thioEstase_long-chain"/>
</dbReference>
<dbReference type="InterPro" id="IPR014940">
    <property type="entry name" value="BAAT_C"/>
</dbReference>
<dbReference type="InterPro" id="IPR006862">
    <property type="entry name" value="Thio_Ohase/aa_AcTrfase"/>
</dbReference>
<dbReference type="InterPro" id="IPR042490">
    <property type="entry name" value="Thio_Ohase/BAAT_N"/>
</dbReference>
<dbReference type="PANTHER" id="PTHR10824:SF12">
    <property type="entry name" value="ACYL-COENZYME A THIOESTERASE 1-RELATED"/>
    <property type="match status" value="1"/>
</dbReference>
<dbReference type="PANTHER" id="PTHR10824">
    <property type="entry name" value="ACYL-COENZYME A THIOESTERASE-RELATED"/>
    <property type="match status" value="1"/>
</dbReference>
<dbReference type="Pfam" id="PF08840">
    <property type="entry name" value="BAAT_C"/>
    <property type="match status" value="1"/>
</dbReference>
<dbReference type="Pfam" id="PF04775">
    <property type="entry name" value="Bile_Hydr_Trans"/>
    <property type="match status" value="1"/>
</dbReference>
<dbReference type="PIRSF" id="PIRSF016521">
    <property type="entry name" value="Acyl-CoA_hydro"/>
    <property type="match status" value="1"/>
</dbReference>
<dbReference type="SUPFAM" id="SSF53474">
    <property type="entry name" value="alpha/beta-Hydrolases"/>
    <property type="match status" value="1"/>
</dbReference>
<name>ACOT2_MOUSE</name>
<comment type="function">
    <text evidence="5">Catalyzes the hydrolysis of acyl-CoAs into free fatty acids and coenzyme A (CoASH), regulating their respective intracellular levels (PubMed:25114170). Displays higher activity toward long chain acyl CoAs (C14-C20) (PubMed:25114170). The enzyme is involved in enhancing the hepatic fatty acid oxidation in mitochondria (PubMed:25114170).</text>
</comment>
<comment type="catalytic activity">
    <reaction evidence="5">
        <text>hexadecanoyl-CoA + H2O = hexadecanoate + CoA + H(+)</text>
        <dbReference type="Rhea" id="RHEA:16645"/>
        <dbReference type="ChEBI" id="CHEBI:7896"/>
        <dbReference type="ChEBI" id="CHEBI:15377"/>
        <dbReference type="ChEBI" id="CHEBI:15378"/>
        <dbReference type="ChEBI" id="CHEBI:57287"/>
        <dbReference type="ChEBI" id="CHEBI:57379"/>
        <dbReference type="EC" id="3.1.2.2"/>
    </reaction>
    <physiologicalReaction direction="left-to-right" evidence="5">
        <dbReference type="Rhea" id="RHEA:16646"/>
    </physiologicalReaction>
</comment>
<comment type="catalytic activity">
    <reaction evidence="5">
        <text>tetradecanoyl-CoA + H2O = tetradecanoate + CoA + H(+)</text>
        <dbReference type="Rhea" id="RHEA:40119"/>
        <dbReference type="ChEBI" id="CHEBI:15377"/>
        <dbReference type="ChEBI" id="CHEBI:15378"/>
        <dbReference type="ChEBI" id="CHEBI:30807"/>
        <dbReference type="ChEBI" id="CHEBI:57287"/>
        <dbReference type="ChEBI" id="CHEBI:57385"/>
    </reaction>
    <physiologicalReaction direction="left-to-right" evidence="5">
        <dbReference type="Rhea" id="RHEA:40120"/>
    </physiologicalReaction>
</comment>
<comment type="catalytic activity">
    <reaction evidence="1">
        <text>octadecanoyl-CoA + H2O = octadecanoate + CoA + H(+)</text>
        <dbReference type="Rhea" id="RHEA:30139"/>
        <dbReference type="ChEBI" id="CHEBI:15377"/>
        <dbReference type="ChEBI" id="CHEBI:15378"/>
        <dbReference type="ChEBI" id="CHEBI:25629"/>
        <dbReference type="ChEBI" id="CHEBI:57287"/>
        <dbReference type="ChEBI" id="CHEBI:57394"/>
    </reaction>
    <physiologicalReaction direction="left-to-right" evidence="1">
        <dbReference type="Rhea" id="RHEA:30140"/>
    </physiologicalReaction>
</comment>
<comment type="catalytic activity">
    <reaction evidence="1">
        <text>eicosanoyl-CoA + H2O = eicosanoate + CoA + H(+)</text>
        <dbReference type="Rhea" id="RHEA:40147"/>
        <dbReference type="ChEBI" id="CHEBI:15377"/>
        <dbReference type="ChEBI" id="CHEBI:15378"/>
        <dbReference type="ChEBI" id="CHEBI:32360"/>
        <dbReference type="ChEBI" id="CHEBI:57287"/>
        <dbReference type="ChEBI" id="CHEBI:57380"/>
    </reaction>
    <physiologicalReaction direction="left-to-right" evidence="1">
        <dbReference type="Rhea" id="RHEA:40148"/>
    </physiologicalReaction>
</comment>
<comment type="catalytic activity">
    <reaction evidence="1">
        <text>decanoyl-CoA + H2O = decanoate + CoA + H(+)</text>
        <dbReference type="Rhea" id="RHEA:40059"/>
        <dbReference type="ChEBI" id="CHEBI:15377"/>
        <dbReference type="ChEBI" id="CHEBI:15378"/>
        <dbReference type="ChEBI" id="CHEBI:27689"/>
        <dbReference type="ChEBI" id="CHEBI:57287"/>
        <dbReference type="ChEBI" id="CHEBI:61430"/>
    </reaction>
    <physiologicalReaction direction="left-to-right" evidence="1">
        <dbReference type="Rhea" id="RHEA:40060"/>
    </physiologicalReaction>
</comment>
<comment type="catalytic activity">
    <reaction evidence="1">
        <text>dodecanoyl-CoA + H2O = dodecanoate + CoA + H(+)</text>
        <dbReference type="Rhea" id="RHEA:30135"/>
        <dbReference type="ChEBI" id="CHEBI:15377"/>
        <dbReference type="ChEBI" id="CHEBI:15378"/>
        <dbReference type="ChEBI" id="CHEBI:18262"/>
        <dbReference type="ChEBI" id="CHEBI:57287"/>
        <dbReference type="ChEBI" id="CHEBI:57375"/>
    </reaction>
    <physiologicalReaction direction="left-to-right" evidence="1">
        <dbReference type="Rhea" id="RHEA:30136"/>
    </physiologicalReaction>
</comment>
<comment type="catalytic activity">
    <reaction evidence="5">
        <text>(9Z)-octadecenoyl-CoA + H2O = (9Z)-octadecenoate + CoA + H(+)</text>
        <dbReference type="Rhea" id="RHEA:40139"/>
        <dbReference type="ChEBI" id="CHEBI:15377"/>
        <dbReference type="ChEBI" id="CHEBI:15378"/>
        <dbReference type="ChEBI" id="CHEBI:30823"/>
        <dbReference type="ChEBI" id="CHEBI:57287"/>
        <dbReference type="ChEBI" id="CHEBI:57387"/>
    </reaction>
    <physiologicalReaction direction="left-to-right" evidence="5">
        <dbReference type="Rhea" id="RHEA:40140"/>
    </physiologicalReaction>
</comment>
<comment type="catalytic activity">
    <reaction evidence="1">
        <text>(9Z)-hexadecenoyl-CoA + H2O = (9Z)-hexadecenoate + CoA + H(+)</text>
        <dbReference type="Rhea" id="RHEA:40131"/>
        <dbReference type="ChEBI" id="CHEBI:15377"/>
        <dbReference type="ChEBI" id="CHEBI:15378"/>
        <dbReference type="ChEBI" id="CHEBI:32372"/>
        <dbReference type="ChEBI" id="CHEBI:57287"/>
        <dbReference type="ChEBI" id="CHEBI:61540"/>
    </reaction>
    <physiologicalReaction direction="left-to-right" evidence="1">
        <dbReference type="Rhea" id="RHEA:40132"/>
    </physiologicalReaction>
</comment>
<comment type="catalytic activity">
    <reaction evidence="1">
        <text>(9E)-octadecenoyl-CoA + H2O = (9E)-octadecenoate + CoA + H(+)</text>
        <dbReference type="Rhea" id="RHEA:40723"/>
        <dbReference type="ChEBI" id="CHEBI:15377"/>
        <dbReference type="ChEBI" id="CHEBI:15378"/>
        <dbReference type="ChEBI" id="CHEBI:30825"/>
        <dbReference type="ChEBI" id="CHEBI:57287"/>
        <dbReference type="ChEBI" id="CHEBI:77537"/>
    </reaction>
    <physiologicalReaction direction="left-to-right" evidence="1">
        <dbReference type="Rhea" id="RHEA:40724"/>
    </physiologicalReaction>
</comment>
<comment type="catalytic activity">
    <reaction evidence="5">
        <text>(9Z,12Z)-octadecadienoyl-CoA + H2O = (9Z,12Z)-octadecadienoate + CoA + H(+)</text>
        <dbReference type="Rhea" id="RHEA:40143"/>
        <dbReference type="ChEBI" id="CHEBI:15377"/>
        <dbReference type="ChEBI" id="CHEBI:15378"/>
        <dbReference type="ChEBI" id="CHEBI:30245"/>
        <dbReference type="ChEBI" id="CHEBI:57287"/>
        <dbReference type="ChEBI" id="CHEBI:57383"/>
    </reaction>
    <physiologicalReaction direction="left-to-right" evidence="5">
        <dbReference type="Rhea" id="RHEA:40144"/>
    </physiologicalReaction>
</comment>
<comment type="pathway">
    <text evidence="5">Lipid metabolism; fatty acid metabolism.</text>
</comment>
<comment type="subunit">
    <text evidence="5">Monomer.</text>
</comment>
<comment type="subcellular location">
    <subcellularLocation>
        <location evidence="5">Mitochondrion matrix</location>
    </subcellularLocation>
</comment>
<comment type="tissue specificity">
    <text evidence="3 4">Highly expressed in brown and white adipose tissue, muscle, heart, kidney, lung, adrenal gland and spleen; weakly expressed in intestine, testis and brain.</text>
</comment>
<comment type="induction">
    <text evidence="4">In the liver, by peroxisome proliferator (Clofibrate) treatment, via the peroxisome proliferator-activated receptors (PPARs) or fasting for 24 hours.</text>
</comment>
<comment type="similarity">
    <text evidence="6">Belongs to the C/M/P thioester hydrolase family.</text>
</comment>
<organism>
    <name type="scientific">Mus musculus</name>
    <name type="common">Mouse</name>
    <dbReference type="NCBI Taxonomy" id="10090"/>
    <lineage>
        <taxon>Eukaryota</taxon>
        <taxon>Metazoa</taxon>
        <taxon>Chordata</taxon>
        <taxon>Craniata</taxon>
        <taxon>Vertebrata</taxon>
        <taxon>Euteleostomi</taxon>
        <taxon>Mammalia</taxon>
        <taxon>Eutheria</taxon>
        <taxon>Euarchontoglires</taxon>
        <taxon>Glires</taxon>
        <taxon>Rodentia</taxon>
        <taxon>Myomorpha</taxon>
        <taxon>Muroidea</taxon>
        <taxon>Muridae</taxon>
        <taxon>Murinae</taxon>
        <taxon>Mus</taxon>
        <taxon>Mus</taxon>
    </lineage>
</organism>
<protein>
    <recommendedName>
        <fullName>Acyl-coenzyme A thioesterase 2, mitochondrial</fullName>
        <shortName>Acyl-CoA thioesterase 2</shortName>
        <ecNumber evidence="5">3.1.2.2</ecNumber>
    </recommendedName>
    <alternativeName>
        <fullName>Acyl coenzyme A thioester hydrolase</fullName>
    </alternativeName>
    <alternativeName>
        <fullName>MTE-I</fullName>
    </alternativeName>
    <alternativeName>
        <fullName>Very-long-chain acyl-CoA thioesterase</fullName>
    </alternativeName>
</protein>
<feature type="transit peptide" description="Mitochondrion" evidence="2">
    <location>
        <begin position="1"/>
        <end position="42"/>
    </location>
</feature>
<feature type="chain" id="PRO_0000034065" description="Acyl-coenzyme A thioesterase 2, mitochondrial">
    <location>
        <begin position="43"/>
        <end position="453"/>
    </location>
</feature>
<feature type="active site" description="Charge relay system" evidence="1">
    <location>
        <position position="273"/>
    </location>
</feature>
<feature type="active site" description="Charge relay system" evidence="1">
    <location>
        <position position="365"/>
    </location>
</feature>
<feature type="active site" description="Charge relay system" evidence="1">
    <location>
        <position position="399"/>
    </location>
</feature>
<feature type="modified residue" description="N6-acetyllysine" evidence="7">
    <location>
        <position position="83"/>
    </location>
</feature>
<feature type="modified residue" description="N6-succinyllysine" evidence="8">
    <location>
        <position position="447"/>
    </location>
</feature>
<feature type="sequence conflict" description="In Ref. 1; AAF13871." evidence="6" ref="1">
    <original>Q</original>
    <variation>H</variation>
    <location>
        <position position="163"/>
    </location>
</feature>
<feature type="sequence conflict" description="In Ref. 1; AAF13871." evidence="6" ref="1">
    <original>L</original>
    <variation>V</variation>
    <location>
        <position position="319"/>
    </location>
</feature>
<accession>Q9QYR9</accession>
<accession>Q3T9C9</accession>
<keyword id="KW-0007">Acetylation</keyword>
<keyword id="KW-0276">Fatty acid metabolism</keyword>
<keyword id="KW-0378">Hydrolase</keyword>
<keyword id="KW-0443">Lipid metabolism</keyword>
<keyword id="KW-0496">Mitochondrion</keyword>
<keyword id="KW-1185">Reference proteome</keyword>
<keyword id="KW-0719">Serine esterase</keyword>
<keyword id="KW-0809">Transit peptide</keyword>
<sequence length="453" mass="49657">MVASSFAVLRASRLCQQDWKSWARLFVPPPLSTGGRTTWARTNATLSVEPEGRSCWDEPLSIAVRGLAPEQPVTLRSALRDEKGALFRAHARYRADAGGELNLARAPALGGSFSGLEPMGLLWAMEPERPLWRLIKRDVQTPFLVELEVLDGHEPDGGQRLAQAVHERHFLAPGVRRVPVREGRVRATLFLPPEPGPFPGIIDLFGVGGGLLEYRASLLAGKGFAVMALAYYNYDDLPKSIETMHMEYFEEAVNYLRSHPEVKGPGIGLLGISKGGELGLAMASFLKGITAAVVINGSVAAVGNTISYKDETIPPVSLLRNQVKMTKDGLLDVVEALQSPLVDKKSFIPVERSDTTFLFLVGQDDHNWKSEFYADEISKRLQAHGKEKPQIICYPAAGHYIEPPYFPLCSAGMHLLVGANITFGGEPRAHAVAQVDAWQQLQTFFHKQLGSKS</sequence>